<organism>
    <name type="scientific">Prochlorococcus marinus (strain MIT 9303)</name>
    <dbReference type="NCBI Taxonomy" id="59922"/>
    <lineage>
        <taxon>Bacteria</taxon>
        <taxon>Bacillati</taxon>
        <taxon>Cyanobacteriota</taxon>
        <taxon>Cyanophyceae</taxon>
        <taxon>Synechococcales</taxon>
        <taxon>Prochlorococcaceae</taxon>
        <taxon>Prochlorococcus</taxon>
    </lineage>
</organism>
<name>ATPG_PROM3</name>
<comment type="function">
    <text evidence="1">Produces ATP from ADP in the presence of a proton gradient across the membrane. The gamma chain is believed to be important in regulating ATPase activity and the flow of protons through the CF(0) complex.</text>
</comment>
<comment type="subunit">
    <text evidence="1">F-type ATPases have 2 components, CF(1) - the catalytic core - and CF(0) - the membrane proton channel. CF(1) has five subunits: alpha(3), beta(3), gamma(1), delta(1), epsilon(1). CF(0) has three main subunits: a, b and c.</text>
</comment>
<comment type="subcellular location">
    <subcellularLocation>
        <location evidence="1">Cellular thylakoid membrane</location>
        <topology evidence="1">Peripheral membrane protein</topology>
    </subcellularLocation>
</comment>
<comment type="similarity">
    <text evidence="1">Belongs to the ATPase gamma chain family.</text>
</comment>
<gene>
    <name evidence="1" type="primary">atpG</name>
    <name evidence="1" type="synonym">atpC</name>
    <name type="ordered locus">P9303_04841</name>
</gene>
<sequence>MANLKDIRDRIVSVKNTRKITEAMRLVAAAKVRRAQEQVLRSRPFADRLARVLENIQSRMSFEMADAPLLKTSDLKTITLLAVTGDRGLCGGYNSNIIKRTEQRYAELNGQGYKVDLVLIGRKAITYFSNRSSQYTIRATFTGLEQVPTSDDAESITTEVLAEFLSQSTDRIEVIYTKFINLVSCNPVVQTLLPLDPQGIAEADDEIFRLTTKDSRLTVEKGVGPANEQPPLPSDIIFEQSPEQLLNALLPLYLQNQMLRALQESAASELASRMTAMNNASDNAKALAKTLTLDYNKARQAAITQEILEVVGGSCS</sequence>
<dbReference type="EMBL" id="CP000554">
    <property type="protein sequence ID" value="ABM77236.1"/>
    <property type="molecule type" value="Genomic_DNA"/>
</dbReference>
<dbReference type="RefSeq" id="WP_011825159.1">
    <property type="nucleotide sequence ID" value="NC_008820.1"/>
</dbReference>
<dbReference type="SMR" id="A2C6X6"/>
<dbReference type="STRING" id="59922.P9303_04841"/>
<dbReference type="KEGG" id="pmf:P9303_04841"/>
<dbReference type="HOGENOM" id="CLU_050669_0_0_3"/>
<dbReference type="BioCyc" id="PMAR59922:G1G80-446-MONOMER"/>
<dbReference type="Proteomes" id="UP000002274">
    <property type="component" value="Chromosome"/>
</dbReference>
<dbReference type="GO" id="GO:0031676">
    <property type="term" value="C:plasma membrane-derived thylakoid membrane"/>
    <property type="evidence" value="ECO:0007669"/>
    <property type="project" value="UniProtKB-SubCell"/>
</dbReference>
<dbReference type="GO" id="GO:0045259">
    <property type="term" value="C:proton-transporting ATP synthase complex"/>
    <property type="evidence" value="ECO:0007669"/>
    <property type="project" value="UniProtKB-KW"/>
</dbReference>
<dbReference type="GO" id="GO:0005524">
    <property type="term" value="F:ATP binding"/>
    <property type="evidence" value="ECO:0007669"/>
    <property type="project" value="UniProtKB-UniRule"/>
</dbReference>
<dbReference type="GO" id="GO:0046933">
    <property type="term" value="F:proton-transporting ATP synthase activity, rotational mechanism"/>
    <property type="evidence" value="ECO:0007669"/>
    <property type="project" value="UniProtKB-UniRule"/>
</dbReference>
<dbReference type="CDD" id="cd12151">
    <property type="entry name" value="F1-ATPase_gamma"/>
    <property type="match status" value="1"/>
</dbReference>
<dbReference type="FunFam" id="3.40.1380.10:FF:000006">
    <property type="entry name" value="ATP synthase gamma chain"/>
    <property type="match status" value="1"/>
</dbReference>
<dbReference type="FunFam" id="1.10.287.80:FF:000003">
    <property type="entry name" value="ATP synthase gamma chain, chloroplastic"/>
    <property type="match status" value="1"/>
</dbReference>
<dbReference type="Gene3D" id="3.40.1380.10">
    <property type="match status" value="1"/>
</dbReference>
<dbReference type="Gene3D" id="1.10.287.80">
    <property type="entry name" value="ATP synthase, gamma subunit, helix hairpin domain"/>
    <property type="match status" value="2"/>
</dbReference>
<dbReference type="HAMAP" id="MF_00815">
    <property type="entry name" value="ATP_synth_gamma_bact"/>
    <property type="match status" value="1"/>
</dbReference>
<dbReference type="InterPro" id="IPR035968">
    <property type="entry name" value="ATP_synth_F1_ATPase_gsu"/>
</dbReference>
<dbReference type="InterPro" id="IPR000131">
    <property type="entry name" value="ATP_synth_F1_gsu"/>
</dbReference>
<dbReference type="NCBIfam" id="TIGR01146">
    <property type="entry name" value="ATPsyn_F1gamma"/>
    <property type="match status" value="1"/>
</dbReference>
<dbReference type="NCBIfam" id="NF004145">
    <property type="entry name" value="PRK05621.1-2"/>
    <property type="match status" value="1"/>
</dbReference>
<dbReference type="PANTHER" id="PTHR11693">
    <property type="entry name" value="ATP SYNTHASE GAMMA CHAIN"/>
    <property type="match status" value="1"/>
</dbReference>
<dbReference type="PANTHER" id="PTHR11693:SF41">
    <property type="entry name" value="ATP SYNTHASE GAMMA CHAIN, CHLOROPLASTIC"/>
    <property type="match status" value="1"/>
</dbReference>
<dbReference type="Pfam" id="PF00231">
    <property type="entry name" value="ATP-synt"/>
    <property type="match status" value="1"/>
</dbReference>
<dbReference type="PRINTS" id="PR00126">
    <property type="entry name" value="ATPASEGAMMA"/>
</dbReference>
<dbReference type="SUPFAM" id="SSF52943">
    <property type="entry name" value="ATP synthase (F1-ATPase), gamma subunit"/>
    <property type="match status" value="1"/>
</dbReference>
<protein>
    <recommendedName>
        <fullName evidence="1">ATP synthase gamma chain</fullName>
    </recommendedName>
    <alternativeName>
        <fullName evidence="1">ATP synthase F1 sector gamma subunit</fullName>
    </alternativeName>
    <alternativeName>
        <fullName evidence="1">F-ATPase gamma subunit</fullName>
    </alternativeName>
</protein>
<proteinExistence type="inferred from homology"/>
<reference key="1">
    <citation type="journal article" date="2007" name="PLoS Genet.">
        <title>Patterns and implications of gene gain and loss in the evolution of Prochlorococcus.</title>
        <authorList>
            <person name="Kettler G.C."/>
            <person name="Martiny A.C."/>
            <person name="Huang K."/>
            <person name="Zucker J."/>
            <person name="Coleman M.L."/>
            <person name="Rodrigue S."/>
            <person name="Chen F."/>
            <person name="Lapidus A."/>
            <person name="Ferriera S."/>
            <person name="Johnson J."/>
            <person name="Steglich C."/>
            <person name="Church G.M."/>
            <person name="Richardson P."/>
            <person name="Chisholm S.W."/>
        </authorList>
    </citation>
    <scope>NUCLEOTIDE SEQUENCE [LARGE SCALE GENOMIC DNA]</scope>
    <source>
        <strain>MIT 9303</strain>
    </source>
</reference>
<evidence type="ECO:0000255" key="1">
    <source>
        <dbReference type="HAMAP-Rule" id="MF_00815"/>
    </source>
</evidence>
<keyword id="KW-0066">ATP synthesis</keyword>
<keyword id="KW-0139">CF(1)</keyword>
<keyword id="KW-0375">Hydrogen ion transport</keyword>
<keyword id="KW-0406">Ion transport</keyword>
<keyword id="KW-0472">Membrane</keyword>
<keyword id="KW-0793">Thylakoid</keyword>
<keyword id="KW-0813">Transport</keyword>
<accession>A2C6X6</accession>
<feature type="chain" id="PRO_1000053284" description="ATP synthase gamma chain">
    <location>
        <begin position="1"/>
        <end position="316"/>
    </location>
</feature>